<sequence>MINSMQFLYLVASYLFGNILTAYIVTKWRHDVDIRNEGSGNPGARNMGRVYGKGYFIVTFLGDAIKGAIVVSIAEYLFGDSTFVMLALLAVLLGHIYPIVFKGKGGKGISTFIGGLIAFDYLIALTLVAVFIIFYLIFKGFTKPGLITIACLPVCMILYSYSIVTTILSALIIVLILYVNRD</sequence>
<organism>
    <name type="scientific">Bacillus cereus (strain ATCC 10987 / NRS 248)</name>
    <dbReference type="NCBI Taxonomy" id="222523"/>
    <lineage>
        <taxon>Bacteria</taxon>
        <taxon>Bacillati</taxon>
        <taxon>Bacillota</taxon>
        <taxon>Bacilli</taxon>
        <taxon>Bacillales</taxon>
        <taxon>Bacillaceae</taxon>
        <taxon>Bacillus</taxon>
        <taxon>Bacillus cereus group</taxon>
    </lineage>
</organism>
<evidence type="ECO:0000255" key="1">
    <source>
        <dbReference type="HAMAP-Rule" id="MF_01043"/>
    </source>
</evidence>
<keyword id="KW-1003">Cell membrane</keyword>
<keyword id="KW-0444">Lipid biosynthesis</keyword>
<keyword id="KW-0443">Lipid metabolism</keyword>
<keyword id="KW-0472">Membrane</keyword>
<keyword id="KW-0594">Phospholipid biosynthesis</keyword>
<keyword id="KW-1208">Phospholipid metabolism</keyword>
<keyword id="KW-0808">Transferase</keyword>
<keyword id="KW-0812">Transmembrane</keyword>
<keyword id="KW-1133">Transmembrane helix</keyword>
<dbReference type="EC" id="2.3.1.275" evidence="1"/>
<dbReference type="EMBL" id="AE017194">
    <property type="protein sequence ID" value="AAS41417.1"/>
    <property type="molecule type" value="Genomic_DNA"/>
</dbReference>
<dbReference type="SMR" id="Q737Z5"/>
<dbReference type="KEGG" id="bca:BCE_2500"/>
<dbReference type="HOGENOM" id="CLU_081254_7_0_9"/>
<dbReference type="UniPathway" id="UPA00085"/>
<dbReference type="Proteomes" id="UP000002527">
    <property type="component" value="Chromosome"/>
</dbReference>
<dbReference type="GO" id="GO:0005886">
    <property type="term" value="C:plasma membrane"/>
    <property type="evidence" value="ECO:0007669"/>
    <property type="project" value="UniProtKB-SubCell"/>
</dbReference>
<dbReference type="GO" id="GO:0043772">
    <property type="term" value="F:acyl-phosphate glycerol-3-phosphate acyltransferase activity"/>
    <property type="evidence" value="ECO:0007669"/>
    <property type="project" value="UniProtKB-UniRule"/>
</dbReference>
<dbReference type="GO" id="GO:0008654">
    <property type="term" value="P:phospholipid biosynthetic process"/>
    <property type="evidence" value="ECO:0007669"/>
    <property type="project" value="UniProtKB-UniRule"/>
</dbReference>
<dbReference type="HAMAP" id="MF_01043">
    <property type="entry name" value="PlsY"/>
    <property type="match status" value="1"/>
</dbReference>
<dbReference type="InterPro" id="IPR003811">
    <property type="entry name" value="G3P_acylTferase_PlsY"/>
</dbReference>
<dbReference type="NCBIfam" id="NF001254">
    <property type="entry name" value="PRK00220.2-1"/>
    <property type="match status" value="1"/>
</dbReference>
<dbReference type="PANTHER" id="PTHR30309:SF0">
    <property type="entry name" value="GLYCEROL-3-PHOSPHATE ACYLTRANSFERASE-RELATED"/>
    <property type="match status" value="1"/>
</dbReference>
<dbReference type="PANTHER" id="PTHR30309">
    <property type="entry name" value="INNER MEMBRANE PROTEIN YGIH"/>
    <property type="match status" value="1"/>
</dbReference>
<dbReference type="Pfam" id="PF02660">
    <property type="entry name" value="G3P_acyltransf"/>
    <property type="match status" value="1"/>
</dbReference>
<dbReference type="SMART" id="SM01207">
    <property type="entry name" value="G3P_acyltransf"/>
    <property type="match status" value="1"/>
</dbReference>
<comment type="function">
    <text evidence="1">Catalyzes the transfer of an acyl group from acyl-phosphate (acyl-PO(4)) to glycerol-3-phosphate (G3P) to form lysophosphatidic acid (LPA). This enzyme utilizes acyl-phosphate as fatty acyl donor, but not acyl-CoA or acyl-ACP.</text>
</comment>
<comment type="catalytic activity">
    <reaction evidence="1">
        <text>an acyl phosphate + sn-glycerol 3-phosphate = a 1-acyl-sn-glycero-3-phosphate + phosphate</text>
        <dbReference type="Rhea" id="RHEA:34075"/>
        <dbReference type="ChEBI" id="CHEBI:43474"/>
        <dbReference type="ChEBI" id="CHEBI:57597"/>
        <dbReference type="ChEBI" id="CHEBI:57970"/>
        <dbReference type="ChEBI" id="CHEBI:59918"/>
        <dbReference type="EC" id="2.3.1.275"/>
    </reaction>
</comment>
<comment type="pathway">
    <text evidence="1">Lipid metabolism; phospholipid metabolism.</text>
</comment>
<comment type="subunit">
    <text evidence="1">Probably interacts with PlsX.</text>
</comment>
<comment type="subcellular location">
    <subcellularLocation>
        <location evidence="1">Cell membrane</location>
        <topology evidence="1">Multi-pass membrane protein</topology>
    </subcellularLocation>
</comment>
<comment type="similarity">
    <text evidence="1">Belongs to the PlsY family.</text>
</comment>
<feature type="chain" id="PRO_0000188317" description="Glycerol-3-phosphate acyltransferase 1">
    <location>
        <begin position="1"/>
        <end position="182"/>
    </location>
</feature>
<feature type="transmembrane region" description="Helical" evidence="1">
    <location>
        <begin position="5"/>
        <end position="25"/>
    </location>
</feature>
<feature type="transmembrane region" description="Helical" evidence="1">
    <location>
        <begin position="54"/>
        <end position="74"/>
    </location>
</feature>
<feature type="transmembrane region" description="Helical" evidence="1">
    <location>
        <begin position="81"/>
        <end position="101"/>
    </location>
</feature>
<feature type="transmembrane region" description="Helical" evidence="1">
    <location>
        <begin position="117"/>
        <end position="137"/>
    </location>
</feature>
<feature type="transmembrane region" description="Helical" evidence="1">
    <location>
        <begin position="157"/>
        <end position="177"/>
    </location>
</feature>
<protein>
    <recommendedName>
        <fullName evidence="1">Glycerol-3-phosphate acyltransferase 1</fullName>
    </recommendedName>
    <alternativeName>
        <fullName evidence="1">Acyl-PO4 G3P acyltransferase 1</fullName>
    </alternativeName>
    <alternativeName>
        <fullName evidence="1">Acyl-phosphate--glycerol-3-phosphate acyltransferase 1</fullName>
    </alternativeName>
    <alternativeName>
        <fullName evidence="1">G3P acyltransferase 1</fullName>
        <shortName evidence="1">GPAT 1</shortName>
        <ecNumber evidence="1">2.3.1.275</ecNumber>
    </alternativeName>
    <alternativeName>
        <fullName evidence="1">Lysophosphatidic acid synthase 1</fullName>
        <shortName evidence="1">LPA synthase 1</shortName>
    </alternativeName>
</protein>
<reference key="1">
    <citation type="journal article" date="2004" name="Nucleic Acids Res.">
        <title>The genome sequence of Bacillus cereus ATCC 10987 reveals metabolic adaptations and a large plasmid related to Bacillus anthracis pXO1.</title>
        <authorList>
            <person name="Rasko D.A."/>
            <person name="Ravel J."/>
            <person name="Oekstad O.A."/>
            <person name="Helgason E."/>
            <person name="Cer R.Z."/>
            <person name="Jiang L."/>
            <person name="Shores K.A."/>
            <person name="Fouts D.E."/>
            <person name="Tourasse N.J."/>
            <person name="Angiuoli S.V."/>
            <person name="Kolonay J.F."/>
            <person name="Nelson W.C."/>
            <person name="Kolstoe A.-B."/>
            <person name="Fraser C.M."/>
            <person name="Read T.D."/>
        </authorList>
    </citation>
    <scope>NUCLEOTIDE SEQUENCE [LARGE SCALE GENOMIC DNA]</scope>
    <source>
        <strain>ATCC 10987 / NRS 248</strain>
    </source>
</reference>
<gene>
    <name evidence="1" type="primary">plsY1</name>
    <name type="ordered locus">BCE_2500</name>
</gene>
<accession>Q737Z5</accession>
<proteinExistence type="inferred from homology"/>
<name>PLSY1_BACC1</name>